<dbReference type="EMBL" id="AL939114">
    <property type="protein sequence ID" value="CAB50997.1"/>
    <property type="status" value="ALT_INIT"/>
    <property type="molecule type" value="Genomic_DNA"/>
</dbReference>
<dbReference type="PIR" id="T36139">
    <property type="entry name" value="T36139"/>
</dbReference>
<dbReference type="RefSeq" id="NP_627142.1">
    <property type="nucleotide sequence ID" value="NC_003888.3"/>
</dbReference>
<dbReference type="SMR" id="Q9S2G5"/>
<dbReference type="STRING" id="100226.gene:17760527"/>
<dbReference type="PaxDb" id="100226-SCO2916"/>
<dbReference type="KEGG" id="sco:SCO2916"/>
<dbReference type="PATRIC" id="fig|100226.15.peg.2974"/>
<dbReference type="eggNOG" id="COG2127">
    <property type="taxonomic scope" value="Bacteria"/>
</dbReference>
<dbReference type="HOGENOM" id="CLU_153743_1_0_11"/>
<dbReference type="InParanoid" id="Q9S2G5"/>
<dbReference type="OrthoDB" id="162238at2"/>
<dbReference type="PhylomeDB" id="Q9S2G5"/>
<dbReference type="Proteomes" id="UP000001973">
    <property type="component" value="Chromosome"/>
</dbReference>
<dbReference type="GO" id="GO:0030163">
    <property type="term" value="P:protein catabolic process"/>
    <property type="evidence" value="ECO:0007669"/>
    <property type="project" value="InterPro"/>
</dbReference>
<dbReference type="GO" id="GO:0006508">
    <property type="term" value="P:proteolysis"/>
    <property type="evidence" value="ECO:0007669"/>
    <property type="project" value="UniProtKB-UniRule"/>
</dbReference>
<dbReference type="FunFam" id="3.30.1390.10:FF:000004">
    <property type="entry name" value="ATP-dependent Clp protease adapter protein ClpS"/>
    <property type="match status" value="1"/>
</dbReference>
<dbReference type="Gene3D" id="3.30.1390.10">
    <property type="match status" value="1"/>
</dbReference>
<dbReference type="HAMAP" id="MF_00302">
    <property type="entry name" value="ClpS"/>
    <property type="match status" value="1"/>
</dbReference>
<dbReference type="InterPro" id="IPR022935">
    <property type="entry name" value="ClpS"/>
</dbReference>
<dbReference type="InterPro" id="IPR003769">
    <property type="entry name" value="ClpS_core"/>
</dbReference>
<dbReference type="InterPro" id="IPR014719">
    <property type="entry name" value="Ribosomal_bL12_C/ClpS-like"/>
</dbReference>
<dbReference type="NCBIfam" id="NF000668">
    <property type="entry name" value="PRK00033.1-1"/>
    <property type="match status" value="1"/>
</dbReference>
<dbReference type="PANTHER" id="PTHR33473:SF19">
    <property type="entry name" value="ATP-DEPENDENT CLP PROTEASE ADAPTER PROTEIN CLPS"/>
    <property type="match status" value="1"/>
</dbReference>
<dbReference type="PANTHER" id="PTHR33473">
    <property type="entry name" value="ATP-DEPENDENT CLP PROTEASE ADAPTER PROTEIN CLPS1, CHLOROPLASTIC"/>
    <property type="match status" value="1"/>
</dbReference>
<dbReference type="Pfam" id="PF02617">
    <property type="entry name" value="ClpS"/>
    <property type="match status" value="1"/>
</dbReference>
<dbReference type="SUPFAM" id="SSF54736">
    <property type="entry name" value="ClpS-like"/>
    <property type="match status" value="1"/>
</dbReference>
<comment type="function">
    <text evidence="1">Involved in the modulation of the specificity of the ClpAP-mediated ATP-dependent protein degradation.</text>
</comment>
<comment type="subunit">
    <text evidence="1">Binds to the N-terminal domain of the chaperone ClpA.</text>
</comment>
<comment type="similarity">
    <text evidence="1">Belongs to the ClpS family.</text>
</comment>
<comment type="sequence caution" evidence="2">
    <conflict type="erroneous initiation">
        <sequence resource="EMBL-CDS" id="CAB50997"/>
    </conflict>
</comment>
<keyword id="KW-1185">Reference proteome</keyword>
<evidence type="ECO:0000255" key="1">
    <source>
        <dbReference type="HAMAP-Rule" id="MF_00302"/>
    </source>
</evidence>
<evidence type="ECO:0000305" key="2"/>
<reference key="1">
    <citation type="journal article" date="2002" name="Nature">
        <title>Complete genome sequence of the model actinomycete Streptomyces coelicolor A3(2).</title>
        <authorList>
            <person name="Bentley S.D."/>
            <person name="Chater K.F."/>
            <person name="Cerdeno-Tarraga A.-M."/>
            <person name="Challis G.L."/>
            <person name="Thomson N.R."/>
            <person name="James K.D."/>
            <person name="Harris D.E."/>
            <person name="Quail M.A."/>
            <person name="Kieser H."/>
            <person name="Harper D."/>
            <person name="Bateman A."/>
            <person name="Brown S."/>
            <person name="Chandra G."/>
            <person name="Chen C.W."/>
            <person name="Collins M."/>
            <person name="Cronin A."/>
            <person name="Fraser A."/>
            <person name="Goble A."/>
            <person name="Hidalgo J."/>
            <person name="Hornsby T."/>
            <person name="Howarth S."/>
            <person name="Huang C.-H."/>
            <person name="Kieser T."/>
            <person name="Larke L."/>
            <person name="Murphy L.D."/>
            <person name="Oliver K."/>
            <person name="O'Neil S."/>
            <person name="Rabbinowitsch E."/>
            <person name="Rajandream M.A."/>
            <person name="Rutherford K.M."/>
            <person name="Rutter S."/>
            <person name="Seeger K."/>
            <person name="Saunders D."/>
            <person name="Sharp S."/>
            <person name="Squares R."/>
            <person name="Squares S."/>
            <person name="Taylor K."/>
            <person name="Warren T."/>
            <person name="Wietzorrek A."/>
            <person name="Woodward J.R."/>
            <person name="Barrell B.G."/>
            <person name="Parkhill J."/>
            <person name="Hopwood D.A."/>
        </authorList>
    </citation>
    <scope>NUCLEOTIDE SEQUENCE [LARGE SCALE GENOMIC DNA]</scope>
    <source>
        <strain>ATCC BAA-471 / A3(2) / M145</strain>
    </source>
</reference>
<gene>
    <name evidence="1" type="primary">clpS</name>
    <name type="ordered locus">SCO2916</name>
    <name type="ORF">SCE19A.16c</name>
</gene>
<name>CLPS_STRCO</name>
<proteinExistence type="inferred from homology"/>
<accession>Q9S2G5</accession>
<feature type="chain" id="PRO_0000215752" description="ATP-dependent Clp protease adapter protein ClpS">
    <location>
        <begin position="1"/>
        <end position="96"/>
    </location>
</feature>
<sequence length="96" mass="11054">MEIEKTESAEEVFAVPEPDVPWVTIVHNDPVNLMSYVTYVFQSYFGYSKDKATKLMMDVHHKGRAVVSSGSREEMERDVQAMHGYGLWATLQQDRK</sequence>
<protein>
    <recommendedName>
        <fullName evidence="1">ATP-dependent Clp protease adapter protein ClpS</fullName>
    </recommendedName>
</protein>
<organism>
    <name type="scientific">Streptomyces coelicolor (strain ATCC BAA-471 / A3(2) / M145)</name>
    <dbReference type="NCBI Taxonomy" id="100226"/>
    <lineage>
        <taxon>Bacteria</taxon>
        <taxon>Bacillati</taxon>
        <taxon>Actinomycetota</taxon>
        <taxon>Actinomycetes</taxon>
        <taxon>Kitasatosporales</taxon>
        <taxon>Streptomycetaceae</taxon>
        <taxon>Streptomyces</taxon>
        <taxon>Streptomyces albidoflavus group</taxon>
    </lineage>
</organism>